<evidence type="ECO:0000250" key="1">
    <source>
        <dbReference type="UniProtKB" id="P27707"/>
    </source>
</evidence>
<evidence type="ECO:0000255" key="2">
    <source>
        <dbReference type="PIRSR" id="PIRSR000705-1"/>
    </source>
</evidence>
<evidence type="ECO:0000255" key="3">
    <source>
        <dbReference type="PIRSR" id="PIRSR000705-2"/>
    </source>
</evidence>
<evidence type="ECO:0000255" key="4">
    <source>
        <dbReference type="PIRSR" id="PIRSR000705-3"/>
    </source>
</evidence>
<evidence type="ECO:0000269" key="5">
    <source>
    </source>
</evidence>
<evidence type="ECO:0000303" key="6">
    <source>
    </source>
</evidence>
<evidence type="ECO:0000305" key="7"/>
<evidence type="ECO:0000305" key="8">
    <source>
    </source>
</evidence>
<evidence type="ECO:0000312" key="9">
    <source>
        <dbReference type="EMBL" id="ACF41169.1"/>
    </source>
</evidence>
<evidence type="ECO:0000312" key="10">
    <source>
        <dbReference type="EMBL" id="CAG32066.1"/>
    </source>
</evidence>
<evidence type="ECO:0000312" key="11">
    <source>
        <dbReference type="Proteomes" id="UP000000539"/>
    </source>
</evidence>
<accession>Q5ZJM7</accession>
<accession>F6TYL4</accession>
<comment type="function">
    <text evidence="5">Phosphorylates the deoxyribonucleosides deoxyadenosine, deoxycytidine and deoxyguanosine (PubMed:27906638). Shows highest activity against deoxyguanosine followed by deoxycytidine and then deoxyadenosine (PubMed:27906638). Shows only very minor activity against deoxyuridine and deoxythymidine (PubMed:27906638).</text>
</comment>
<comment type="catalytic activity">
    <reaction evidence="5">
        <text>2'-deoxycytidine + a ribonucleoside 5'-triphosphate = dCMP + a ribonucleoside 5'-diphosphate + H(+)</text>
        <dbReference type="Rhea" id="RHEA:20061"/>
        <dbReference type="ChEBI" id="CHEBI:15378"/>
        <dbReference type="ChEBI" id="CHEBI:15698"/>
        <dbReference type="ChEBI" id="CHEBI:57566"/>
        <dbReference type="ChEBI" id="CHEBI:57930"/>
        <dbReference type="ChEBI" id="CHEBI:61557"/>
        <dbReference type="EC" id="2.7.1.74"/>
    </reaction>
</comment>
<comment type="catalytic activity">
    <reaction evidence="5">
        <text>2'-deoxyguanosine + ATP = dGMP + ADP + H(+)</text>
        <dbReference type="Rhea" id="RHEA:19201"/>
        <dbReference type="ChEBI" id="CHEBI:15378"/>
        <dbReference type="ChEBI" id="CHEBI:17172"/>
        <dbReference type="ChEBI" id="CHEBI:30616"/>
        <dbReference type="ChEBI" id="CHEBI:57673"/>
        <dbReference type="ChEBI" id="CHEBI:456216"/>
        <dbReference type="EC" id="2.7.1.113"/>
    </reaction>
</comment>
<comment type="catalytic activity">
    <reaction evidence="5">
        <text>2'-deoxyadenosine + ATP = dAMP + ADP + H(+)</text>
        <dbReference type="Rhea" id="RHEA:23452"/>
        <dbReference type="ChEBI" id="CHEBI:15378"/>
        <dbReference type="ChEBI" id="CHEBI:17256"/>
        <dbReference type="ChEBI" id="CHEBI:30616"/>
        <dbReference type="ChEBI" id="CHEBI:58245"/>
        <dbReference type="ChEBI" id="CHEBI:456216"/>
        <dbReference type="EC" id="2.7.1.76"/>
    </reaction>
</comment>
<comment type="biophysicochemical properties">
    <kinetics>
        <KM evidence="5">19.8 uM for deoxyguanosine</KM>
        <KM evidence="5">64 uM for deoxycytidine</KM>
        <KM evidence="5">104 uM for deoxyadenosine</KM>
        <KM evidence="5">20317 uM for deoxyuridine</KM>
        <KM evidence="5">33613 uM for deoxythymidine</KM>
        <Vmax evidence="5">1.3 umol/min/mg enzyme toward deoxyguanosine</Vmax>
        <Vmax evidence="5">1.0 umol/min/mg enzyme toward deoxycytidine</Vmax>
        <Vmax evidence="5">4.9 umol/min/mg enzyme toward deoxyadenosine</Vmax>
        <Vmax evidence="5">1.0 umol/min/mg enzyme toward deoxyuridine</Vmax>
        <Vmax evidence="5">0.5 umol/min/mg enzyme toward deoxythymidine</Vmax>
        <text evidence="5">kcat is 0.67 sec(-1) with deoxyguanosine as substrate. kcat is 0.52 sec(-1) with deoxycytidine as substrate. kcat is 2.56 sec(-1) with deoxyadenosine as substrate. kcat is 0.53 sec(-1) with deoxyuridine as substrate. kcat is 0.26 sec(-1) with deoxythymidine as substrate.</text>
    </kinetics>
</comment>
<comment type="subunit">
    <text evidence="1">Homodimer.</text>
</comment>
<comment type="subcellular location">
    <subcellularLocation>
        <location evidence="1">Nucleus</location>
    </subcellularLocation>
</comment>
<comment type="tissue specificity">
    <text evidence="5">Expressed at high levels in adult intestine, spleen, thymus and testis with lower levels in skeletal muscle and eye. In the embryo, expressed at higher levels until day 10 with lower levels in later stages.</text>
</comment>
<comment type="similarity">
    <text evidence="7">Belongs to the DCK/DGK family.</text>
</comment>
<feature type="chain" id="PRO_0000449295" description="Deoxycytidine kinase 2">
    <location>
        <begin position="1"/>
        <end position="265"/>
    </location>
</feature>
<feature type="active site" description="Proton acceptor" evidence="2">
    <location>
        <position position="130"/>
    </location>
</feature>
<feature type="binding site" evidence="4">
    <location>
        <begin position="31"/>
        <end position="39"/>
    </location>
    <ligand>
        <name>ATP</name>
        <dbReference type="ChEBI" id="CHEBI:30616"/>
    </ligand>
</feature>
<feature type="binding site" evidence="3">
    <location>
        <position position="56"/>
    </location>
    <ligand>
        <name>substrate</name>
    </ligand>
</feature>
<feature type="binding site" evidence="3">
    <location>
        <position position="89"/>
    </location>
    <ligand>
        <name>substrate</name>
    </ligand>
</feature>
<feature type="binding site" evidence="3">
    <location>
        <position position="100"/>
    </location>
    <ligand>
        <name>substrate</name>
    </ligand>
</feature>
<feature type="binding site" evidence="3">
    <location>
        <position position="131"/>
    </location>
    <ligand>
        <name>substrate</name>
    </ligand>
</feature>
<feature type="binding site" evidence="3">
    <location>
        <position position="136"/>
    </location>
    <ligand>
        <name>substrate</name>
    </ligand>
</feature>
<feature type="binding site" evidence="4">
    <location>
        <begin position="191"/>
        <end position="195"/>
    </location>
    <ligand>
        <name>ATP</name>
        <dbReference type="ChEBI" id="CHEBI:30616"/>
    </ligand>
</feature>
<feature type="binding site" evidence="3">
    <location>
        <position position="200"/>
    </location>
    <ligand>
        <name>substrate</name>
    </ligand>
</feature>
<feature type="binding site" evidence="4">
    <location>
        <begin position="243"/>
        <end position="245"/>
    </location>
    <ligand>
        <name>ATP</name>
        <dbReference type="ChEBI" id="CHEBI:30616"/>
    </ligand>
</feature>
<keyword id="KW-0067">ATP-binding</keyword>
<keyword id="KW-0418">Kinase</keyword>
<keyword id="KW-0547">Nucleotide-binding</keyword>
<keyword id="KW-0539">Nucleus</keyword>
<keyword id="KW-1185">Reference proteome</keyword>
<keyword id="KW-0808">Transferase</keyword>
<sequence length="265" mass="31240">MSAPAKRRCRGPAADLDSSFQKRLRKISIEGNIAAGKSTLVRLLEKHSDEWEVIPEPIAKWCNIQTSEDECKELSTSQKSGGNLLQMLYDKPTRWAYTFQTYACLSRVRAQLKPISAKLHEAEHPVQFFERSVYSDRYVFASNLFESGNINETEWAIYQDWHSWLLNQFQSEIELDGIIYLRTTPQKCMERLQKRGRKEEEGIDLEYLENLHYKHETWLYEKTMRVDFENLKEIPILVLDVNEDFKNDKIKQEYLIDEIKSFLTS</sequence>
<proteinExistence type="evidence at protein level"/>
<name>DCK2_CHICK</name>
<protein>
    <recommendedName>
        <fullName evidence="8">Deoxycytidine kinase 2</fullName>
        <shortName evidence="6">GgdCK2</shortName>
        <ecNumber evidence="5">2.7.1.74</ecNumber>
    </recommendedName>
    <alternativeName>
        <fullName evidence="8">Deoxyadenosine kinase 2</fullName>
        <ecNumber evidence="5">2.7.1.76</ecNumber>
    </alternativeName>
    <alternativeName>
        <fullName evidence="8">Deoxyguanosine kinase 2</fullName>
        <ecNumber evidence="5">2.7.1.113</ecNumber>
    </alternativeName>
</protein>
<dbReference type="EC" id="2.7.1.74" evidence="5"/>
<dbReference type="EC" id="2.7.1.76" evidence="5"/>
<dbReference type="EC" id="2.7.1.113" evidence="5"/>
<dbReference type="EMBL" id="EU835758">
    <property type="protein sequence ID" value="ACF41169.1"/>
    <property type="molecule type" value="mRNA"/>
</dbReference>
<dbReference type="EMBL" id="AJ720407">
    <property type="protein sequence ID" value="CAG32066.1"/>
    <property type="molecule type" value="mRNA"/>
</dbReference>
<dbReference type="EMBL" id="AADN05000072">
    <property type="status" value="NOT_ANNOTATED_CDS"/>
    <property type="molecule type" value="Genomic_DNA"/>
</dbReference>
<dbReference type="RefSeq" id="NP_001072968.1">
    <property type="nucleotide sequence ID" value="NM_001079500.2"/>
</dbReference>
<dbReference type="SMR" id="Q5ZJM7"/>
<dbReference type="FunCoup" id="Q5ZJM7">
    <property type="interactions" value="77"/>
</dbReference>
<dbReference type="STRING" id="9031.ENSGALP00000009571"/>
<dbReference type="PaxDb" id="9031-ENSGALP00000009571"/>
<dbReference type="Ensembl" id="ENSGALT00010036212.1">
    <property type="protein sequence ID" value="ENSGALP00010021052.1"/>
    <property type="gene ID" value="ENSGALG00010015049.1"/>
</dbReference>
<dbReference type="GeneID" id="770922"/>
<dbReference type="KEGG" id="gga:770922"/>
<dbReference type="CTD" id="770922"/>
<dbReference type="VEuPathDB" id="HostDB:geneid_770922"/>
<dbReference type="eggNOG" id="KOG4235">
    <property type="taxonomic scope" value="Eukaryota"/>
</dbReference>
<dbReference type="GeneTree" id="ENSGT00940000164917"/>
<dbReference type="HOGENOM" id="CLU_030466_1_1_1"/>
<dbReference type="InParanoid" id="Q5ZJM7"/>
<dbReference type="OMA" id="WLFHRNL"/>
<dbReference type="OrthoDB" id="431068at2759"/>
<dbReference type="PhylomeDB" id="Q5ZJM7"/>
<dbReference type="TreeFam" id="TF324413"/>
<dbReference type="PRO" id="PR:Q5ZJM7"/>
<dbReference type="Proteomes" id="UP000000539">
    <property type="component" value="Chromosome 13"/>
</dbReference>
<dbReference type="Bgee" id="ENSGALG00000005961">
    <property type="expression patterns" value="Expressed in granulocyte and 13 other cell types or tissues"/>
</dbReference>
<dbReference type="GO" id="GO:0005737">
    <property type="term" value="C:cytoplasm"/>
    <property type="evidence" value="ECO:0000318"/>
    <property type="project" value="GO_Central"/>
</dbReference>
<dbReference type="GO" id="GO:0005739">
    <property type="term" value="C:mitochondrion"/>
    <property type="evidence" value="ECO:0000318"/>
    <property type="project" value="GO_Central"/>
</dbReference>
<dbReference type="GO" id="GO:0005634">
    <property type="term" value="C:nucleus"/>
    <property type="evidence" value="ECO:0007669"/>
    <property type="project" value="UniProtKB-SubCell"/>
</dbReference>
<dbReference type="GO" id="GO:0005524">
    <property type="term" value="F:ATP binding"/>
    <property type="evidence" value="ECO:0007669"/>
    <property type="project" value="UniProtKB-KW"/>
</dbReference>
<dbReference type="GO" id="GO:0004136">
    <property type="term" value="F:deoxyadenosine kinase activity"/>
    <property type="evidence" value="ECO:0000314"/>
    <property type="project" value="UniProtKB"/>
</dbReference>
<dbReference type="GO" id="GO:0004137">
    <property type="term" value="F:deoxycytidine kinase activity"/>
    <property type="evidence" value="ECO:0000314"/>
    <property type="project" value="UniProtKB"/>
</dbReference>
<dbReference type="GO" id="GO:0004138">
    <property type="term" value="F:deoxyguanosine kinase activity"/>
    <property type="evidence" value="ECO:0000314"/>
    <property type="project" value="UniProtKB"/>
</dbReference>
<dbReference type="GO" id="GO:0019136">
    <property type="term" value="F:deoxynucleoside kinase activity"/>
    <property type="evidence" value="ECO:0000318"/>
    <property type="project" value="GO_Central"/>
</dbReference>
<dbReference type="GO" id="GO:0009157">
    <property type="term" value="P:deoxyribonucleoside monophosphate biosynthetic process"/>
    <property type="evidence" value="ECO:0000314"/>
    <property type="project" value="UniProtKB"/>
</dbReference>
<dbReference type="CDD" id="cd01673">
    <property type="entry name" value="dNK"/>
    <property type="match status" value="1"/>
</dbReference>
<dbReference type="FunFam" id="3.40.50.300:FF:000461">
    <property type="entry name" value="Deoxycytidine kinase"/>
    <property type="match status" value="1"/>
</dbReference>
<dbReference type="Gene3D" id="3.40.50.300">
    <property type="entry name" value="P-loop containing nucleotide triphosphate hydrolases"/>
    <property type="match status" value="1"/>
</dbReference>
<dbReference type="InterPro" id="IPR002624">
    <property type="entry name" value="DCK/DGK"/>
</dbReference>
<dbReference type="InterPro" id="IPR050566">
    <property type="entry name" value="Deoxyribonucleoside_kinase"/>
</dbReference>
<dbReference type="InterPro" id="IPR031314">
    <property type="entry name" value="DNK_dom"/>
</dbReference>
<dbReference type="InterPro" id="IPR027417">
    <property type="entry name" value="P-loop_NTPase"/>
</dbReference>
<dbReference type="PANTHER" id="PTHR10513:SF48">
    <property type="entry name" value="DEOXYCYTIDINE KINASE 2"/>
    <property type="match status" value="1"/>
</dbReference>
<dbReference type="PANTHER" id="PTHR10513">
    <property type="entry name" value="DEOXYNUCLEOSIDE KINASE"/>
    <property type="match status" value="1"/>
</dbReference>
<dbReference type="Pfam" id="PF01712">
    <property type="entry name" value="dNK"/>
    <property type="match status" value="1"/>
</dbReference>
<dbReference type="PIRSF" id="PIRSF000705">
    <property type="entry name" value="DNK"/>
    <property type="match status" value="1"/>
</dbReference>
<dbReference type="SUPFAM" id="SSF52540">
    <property type="entry name" value="P-loop containing nucleoside triphosphate hydrolases"/>
    <property type="match status" value="1"/>
</dbReference>
<organism evidence="10">
    <name type="scientific">Gallus gallus</name>
    <name type="common">Chicken</name>
    <dbReference type="NCBI Taxonomy" id="9031"/>
    <lineage>
        <taxon>Eukaryota</taxon>
        <taxon>Metazoa</taxon>
        <taxon>Chordata</taxon>
        <taxon>Craniata</taxon>
        <taxon>Vertebrata</taxon>
        <taxon>Euteleostomi</taxon>
        <taxon>Archelosauria</taxon>
        <taxon>Archosauria</taxon>
        <taxon>Dinosauria</taxon>
        <taxon>Saurischia</taxon>
        <taxon>Theropoda</taxon>
        <taxon>Coelurosauria</taxon>
        <taxon>Aves</taxon>
        <taxon>Neognathae</taxon>
        <taxon>Galloanserae</taxon>
        <taxon>Galliformes</taxon>
        <taxon>Phasianidae</taxon>
        <taxon>Phasianinae</taxon>
        <taxon>Gallus</taxon>
    </lineage>
</organism>
<gene>
    <name evidence="6" type="primary">DCK2</name>
    <name evidence="9" type="synonym">DAK</name>
    <name evidence="10" type="ORF">RCJMB04_17b6</name>
</gene>
<reference evidence="9" key="1">
    <citation type="submission" date="2008-06" db="EMBL/GenBank/DDBJ databases">
        <title>Mammals have lost vertebrate deoxyadenosine kinase.</title>
        <authorList>
            <person name="Gojkovic Z."/>
        </authorList>
    </citation>
    <scope>NUCLEOTIDE SEQUENCE [MRNA]</scope>
</reference>
<reference evidence="10" key="2">
    <citation type="journal article" date="2005" name="Genome Biol.">
        <title>Full-length cDNAs from chicken bursal lymphocytes to facilitate gene function analysis.</title>
        <authorList>
            <person name="Caldwell R.B."/>
            <person name="Kierzek A.M."/>
            <person name="Arakawa H."/>
            <person name="Bezzubov Y."/>
            <person name="Zaim J."/>
            <person name="Fiedler P."/>
            <person name="Kutter S."/>
            <person name="Blagodatski A."/>
            <person name="Kostovska D."/>
            <person name="Koter M."/>
            <person name="Plachy J."/>
            <person name="Carninci P."/>
            <person name="Hayashizaki Y."/>
            <person name="Buerstedde J.-M."/>
        </authorList>
    </citation>
    <scope>NUCLEOTIDE SEQUENCE [LARGE SCALE MRNA]</scope>
    <source>
        <strain evidence="10">CB</strain>
        <tissue evidence="10">Bursa of Fabricius</tissue>
    </source>
</reference>
<reference evidence="11" key="3">
    <citation type="journal article" date="2004" name="Nature">
        <title>Sequence and comparative analysis of the chicken genome provide unique perspectives on vertebrate evolution.</title>
        <authorList>
            <person name="Hillier L.W."/>
            <person name="Miller W."/>
            <person name="Birney E."/>
            <person name="Warren W."/>
            <person name="Hardison R.C."/>
            <person name="Ponting C.P."/>
            <person name="Bork P."/>
            <person name="Burt D.W."/>
            <person name="Groenen M.A.M."/>
            <person name="Delany M.E."/>
            <person name="Dodgson J.B."/>
            <person name="Chinwalla A.T."/>
            <person name="Cliften P.F."/>
            <person name="Clifton S.W."/>
            <person name="Delehaunty K.D."/>
            <person name="Fronick C."/>
            <person name="Fulton R.S."/>
            <person name="Graves T.A."/>
            <person name="Kremitzki C."/>
            <person name="Layman D."/>
            <person name="Magrini V."/>
            <person name="McPherson J.D."/>
            <person name="Miner T.L."/>
            <person name="Minx P."/>
            <person name="Nash W.E."/>
            <person name="Nhan M.N."/>
            <person name="Nelson J.O."/>
            <person name="Oddy L.G."/>
            <person name="Pohl C.S."/>
            <person name="Randall-Maher J."/>
            <person name="Smith S.M."/>
            <person name="Wallis J.W."/>
            <person name="Yang S.-P."/>
            <person name="Romanov M.N."/>
            <person name="Rondelli C.M."/>
            <person name="Paton B."/>
            <person name="Smith J."/>
            <person name="Morrice D."/>
            <person name="Daniels L."/>
            <person name="Tempest H.G."/>
            <person name="Robertson L."/>
            <person name="Masabanda J.S."/>
            <person name="Griffin D.K."/>
            <person name="Vignal A."/>
            <person name="Fillon V."/>
            <person name="Jacobbson L."/>
            <person name="Kerje S."/>
            <person name="Andersson L."/>
            <person name="Crooijmans R.P."/>
            <person name="Aerts J."/>
            <person name="van der Poel J.J."/>
            <person name="Ellegren H."/>
            <person name="Caldwell R.B."/>
            <person name="Hubbard S.J."/>
            <person name="Grafham D.V."/>
            <person name="Kierzek A.M."/>
            <person name="McLaren S.R."/>
            <person name="Overton I.M."/>
            <person name="Arakawa H."/>
            <person name="Beattie K.J."/>
            <person name="Bezzubov Y."/>
            <person name="Boardman P.E."/>
            <person name="Bonfield J.K."/>
            <person name="Croning M.D.R."/>
            <person name="Davies R.M."/>
            <person name="Francis M.D."/>
            <person name="Humphray S.J."/>
            <person name="Scott C.E."/>
            <person name="Taylor R.G."/>
            <person name="Tickle C."/>
            <person name="Brown W.R.A."/>
            <person name="Rogers J."/>
            <person name="Buerstedde J.-M."/>
            <person name="Wilson S.A."/>
            <person name="Stubbs L."/>
            <person name="Ovcharenko I."/>
            <person name="Gordon L."/>
            <person name="Lucas S."/>
            <person name="Miller M.M."/>
            <person name="Inoko H."/>
            <person name="Shiina T."/>
            <person name="Kaufman J."/>
            <person name="Salomonsen J."/>
            <person name="Skjoedt K."/>
            <person name="Wong G.K.-S."/>
            <person name="Wang J."/>
            <person name="Liu B."/>
            <person name="Wang J."/>
            <person name="Yu J."/>
            <person name="Yang H."/>
            <person name="Nefedov M."/>
            <person name="Koriabine M."/>
            <person name="Dejong P.J."/>
            <person name="Goodstadt L."/>
            <person name="Webber C."/>
            <person name="Dickens N.J."/>
            <person name="Letunic I."/>
            <person name="Suyama M."/>
            <person name="Torrents D."/>
            <person name="von Mering C."/>
            <person name="Zdobnov E.M."/>
            <person name="Makova K."/>
            <person name="Nekrutenko A."/>
            <person name="Elnitski L."/>
            <person name="Eswara P."/>
            <person name="King D.C."/>
            <person name="Yang S.-P."/>
            <person name="Tyekucheva S."/>
            <person name="Radakrishnan A."/>
            <person name="Harris R.S."/>
            <person name="Chiaromonte F."/>
            <person name="Taylor J."/>
            <person name="He J."/>
            <person name="Rijnkels M."/>
            <person name="Griffiths-Jones S."/>
            <person name="Ureta-Vidal A."/>
            <person name="Hoffman M.M."/>
            <person name="Severin J."/>
            <person name="Searle S.M.J."/>
            <person name="Law A.S."/>
            <person name="Speed D."/>
            <person name="Waddington D."/>
            <person name="Cheng Z."/>
            <person name="Tuzun E."/>
            <person name="Eichler E."/>
            <person name="Bao Z."/>
            <person name="Flicek P."/>
            <person name="Shteynberg D.D."/>
            <person name="Brent M.R."/>
            <person name="Bye J.M."/>
            <person name="Huckle E.J."/>
            <person name="Chatterji S."/>
            <person name="Dewey C."/>
            <person name="Pachter L."/>
            <person name="Kouranov A."/>
            <person name="Mourelatos Z."/>
            <person name="Hatzigeorgiou A.G."/>
            <person name="Paterson A.H."/>
            <person name="Ivarie R."/>
            <person name="Brandstrom M."/>
            <person name="Axelsson E."/>
            <person name="Backstrom N."/>
            <person name="Berlin S."/>
            <person name="Webster M.T."/>
            <person name="Pourquie O."/>
            <person name="Reymond A."/>
            <person name="Ucla C."/>
            <person name="Antonarakis S.E."/>
            <person name="Long M."/>
            <person name="Emerson J.J."/>
            <person name="Betran E."/>
            <person name="Dupanloup I."/>
            <person name="Kaessmann H."/>
            <person name="Hinrichs A.S."/>
            <person name="Bejerano G."/>
            <person name="Furey T.S."/>
            <person name="Harte R.A."/>
            <person name="Raney B."/>
            <person name="Siepel A."/>
            <person name="Kent W.J."/>
            <person name="Haussler D."/>
            <person name="Eyras E."/>
            <person name="Castelo R."/>
            <person name="Abril J.F."/>
            <person name="Castellano S."/>
            <person name="Camara F."/>
            <person name="Parra G."/>
            <person name="Guigo R."/>
            <person name="Bourque G."/>
            <person name="Tesler G."/>
            <person name="Pevzner P.A."/>
            <person name="Smit A."/>
            <person name="Fulton L.A."/>
            <person name="Mardis E.R."/>
            <person name="Wilson R.K."/>
        </authorList>
    </citation>
    <scope>NUCLEOTIDE SEQUENCE [LARGE SCALE GENOMIC DNA]</scope>
    <source>
        <strain evidence="11">Red jungle fowl</strain>
    </source>
</reference>
<reference evidence="7" key="4">
    <citation type="journal article" date="2016" name="Nucleosides Nucleotides Nucleic Acids">
        <title>Gene duplications and losses among vertebrate deoxyribonucleoside kinases of the non-TK1 Family.</title>
        <authorList>
            <person name="Mutahir Z."/>
            <person name="Christiansen L.S."/>
            <person name="Clausen A.R."/>
            <person name="Berchtold M.W."/>
            <person name="Gojkovic Z."/>
            <person name="Munch-Petersen B."/>
            <person name="Knecht W."/>
            <person name="Piskur J."/>
        </authorList>
    </citation>
    <scope>FUNCTION</scope>
    <scope>CATALYTIC ACTIVITY</scope>
    <scope>BIOPHYSICOCHEMICAL PROPERTIES</scope>
    <scope>TISSUE SPECIFICITY</scope>
</reference>